<feature type="chain" id="PRO_1000142395" description="Large ribosomal subunit protein uL5">
    <location>
        <begin position="1"/>
        <end position="179"/>
    </location>
</feature>
<feature type="modified residue" description="N6-acetyllysine" evidence="1">
    <location>
        <position position="3"/>
    </location>
</feature>
<dbReference type="EMBL" id="CU928164">
    <property type="protein sequence ID" value="CAR19916.1"/>
    <property type="molecule type" value="Genomic_DNA"/>
</dbReference>
<dbReference type="RefSeq" id="WP_001096200.1">
    <property type="nucleotide sequence ID" value="NC_011750.1"/>
</dbReference>
<dbReference type="RefSeq" id="YP_002409699.1">
    <property type="nucleotide sequence ID" value="NC_011750.1"/>
</dbReference>
<dbReference type="SMR" id="B7NLM7"/>
<dbReference type="STRING" id="585057.ECIAI39_3802"/>
<dbReference type="GeneID" id="93778679"/>
<dbReference type="KEGG" id="ect:ECIAI39_3802"/>
<dbReference type="PATRIC" id="fig|585057.6.peg.3939"/>
<dbReference type="HOGENOM" id="CLU_061015_2_1_6"/>
<dbReference type="PRO" id="PR:B7NLM7"/>
<dbReference type="Proteomes" id="UP000000749">
    <property type="component" value="Chromosome"/>
</dbReference>
<dbReference type="GO" id="GO:1990904">
    <property type="term" value="C:ribonucleoprotein complex"/>
    <property type="evidence" value="ECO:0007669"/>
    <property type="project" value="UniProtKB-KW"/>
</dbReference>
<dbReference type="GO" id="GO:0005840">
    <property type="term" value="C:ribosome"/>
    <property type="evidence" value="ECO:0007669"/>
    <property type="project" value="UniProtKB-KW"/>
</dbReference>
<dbReference type="GO" id="GO:0019843">
    <property type="term" value="F:rRNA binding"/>
    <property type="evidence" value="ECO:0007669"/>
    <property type="project" value="UniProtKB-UniRule"/>
</dbReference>
<dbReference type="GO" id="GO:0003735">
    <property type="term" value="F:structural constituent of ribosome"/>
    <property type="evidence" value="ECO:0007669"/>
    <property type="project" value="InterPro"/>
</dbReference>
<dbReference type="GO" id="GO:0000049">
    <property type="term" value="F:tRNA binding"/>
    <property type="evidence" value="ECO:0007669"/>
    <property type="project" value="UniProtKB-UniRule"/>
</dbReference>
<dbReference type="GO" id="GO:0006412">
    <property type="term" value="P:translation"/>
    <property type="evidence" value="ECO:0007669"/>
    <property type="project" value="UniProtKB-UniRule"/>
</dbReference>
<dbReference type="FunFam" id="3.30.1440.10:FF:000001">
    <property type="entry name" value="50S ribosomal protein L5"/>
    <property type="match status" value="1"/>
</dbReference>
<dbReference type="Gene3D" id="3.30.1440.10">
    <property type="match status" value="1"/>
</dbReference>
<dbReference type="HAMAP" id="MF_01333_B">
    <property type="entry name" value="Ribosomal_uL5_B"/>
    <property type="match status" value="1"/>
</dbReference>
<dbReference type="InterPro" id="IPR002132">
    <property type="entry name" value="Ribosomal_uL5"/>
</dbReference>
<dbReference type="InterPro" id="IPR020930">
    <property type="entry name" value="Ribosomal_uL5_bac-type"/>
</dbReference>
<dbReference type="InterPro" id="IPR031309">
    <property type="entry name" value="Ribosomal_uL5_C"/>
</dbReference>
<dbReference type="InterPro" id="IPR020929">
    <property type="entry name" value="Ribosomal_uL5_CS"/>
</dbReference>
<dbReference type="InterPro" id="IPR022803">
    <property type="entry name" value="Ribosomal_uL5_dom_sf"/>
</dbReference>
<dbReference type="InterPro" id="IPR031310">
    <property type="entry name" value="Ribosomal_uL5_N"/>
</dbReference>
<dbReference type="NCBIfam" id="NF000585">
    <property type="entry name" value="PRK00010.1"/>
    <property type="match status" value="1"/>
</dbReference>
<dbReference type="PANTHER" id="PTHR11994">
    <property type="entry name" value="60S RIBOSOMAL PROTEIN L11-RELATED"/>
    <property type="match status" value="1"/>
</dbReference>
<dbReference type="Pfam" id="PF00281">
    <property type="entry name" value="Ribosomal_L5"/>
    <property type="match status" value="1"/>
</dbReference>
<dbReference type="Pfam" id="PF00673">
    <property type="entry name" value="Ribosomal_L5_C"/>
    <property type="match status" value="1"/>
</dbReference>
<dbReference type="PIRSF" id="PIRSF002161">
    <property type="entry name" value="Ribosomal_L5"/>
    <property type="match status" value="1"/>
</dbReference>
<dbReference type="SUPFAM" id="SSF55282">
    <property type="entry name" value="RL5-like"/>
    <property type="match status" value="1"/>
</dbReference>
<dbReference type="PROSITE" id="PS00358">
    <property type="entry name" value="RIBOSOMAL_L5"/>
    <property type="match status" value="1"/>
</dbReference>
<name>RL5_ECO7I</name>
<protein>
    <recommendedName>
        <fullName evidence="1">Large ribosomal subunit protein uL5</fullName>
    </recommendedName>
    <alternativeName>
        <fullName evidence="2">50S ribosomal protein L5</fullName>
    </alternativeName>
</protein>
<evidence type="ECO:0000255" key="1">
    <source>
        <dbReference type="HAMAP-Rule" id="MF_01333"/>
    </source>
</evidence>
<evidence type="ECO:0000305" key="2"/>
<proteinExistence type="inferred from homology"/>
<sequence length="179" mass="20302">MAKLHDYYKDEVVKKLMTEFNYNSVMQVPRVEKITLNMGVGEAIADKKLLDNAAADLAAISGQKPLITKARKSVAGFKIRQGYPIGCKVTLRGERMWEFFERLITIAVPRIRDFRGLSAKSFDGRGNYSMGVREQIIFPEIDYDKVDRVRGLDITITTTAKSDEEGRALLAAFDFPFRK</sequence>
<gene>
    <name evidence="1" type="primary">rplE</name>
    <name type="ordered locus">ECIAI39_3802</name>
</gene>
<reference key="1">
    <citation type="journal article" date="2009" name="PLoS Genet.">
        <title>Organised genome dynamics in the Escherichia coli species results in highly diverse adaptive paths.</title>
        <authorList>
            <person name="Touchon M."/>
            <person name="Hoede C."/>
            <person name="Tenaillon O."/>
            <person name="Barbe V."/>
            <person name="Baeriswyl S."/>
            <person name="Bidet P."/>
            <person name="Bingen E."/>
            <person name="Bonacorsi S."/>
            <person name="Bouchier C."/>
            <person name="Bouvet O."/>
            <person name="Calteau A."/>
            <person name="Chiapello H."/>
            <person name="Clermont O."/>
            <person name="Cruveiller S."/>
            <person name="Danchin A."/>
            <person name="Diard M."/>
            <person name="Dossat C."/>
            <person name="Karoui M.E."/>
            <person name="Frapy E."/>
            <person name="Garry L."/>
            <person name="Ghigo J.M."/>
            <person name="Gilles A.M."/>
            <person name="Johnson J."/>
            <person name="Le Bouguenec C."/>
            <person name="Lescat M."/>
            <person name="Mangenot S."/>
            <person name="Martinez-Jehanne V."/>
            <person name="Matic I."/>
            <person name="Nassif X."/>
            <person name="Oztas S."/>
            <person name="Petit M.A."/>
            <person name="Pichon C."/>
            <person name="Rouy Z."/>
            <person name="Ruf C.S."/>
            <person name="Schneider D."/>
            <person name="Tourret J."/>
            <person name="Vacherie B."/>
            <person name="Vallenet D."/>
            <person name="Medigue C."/>
            <person name="Rocha E.P.C."/>
            <person name="Denamur E."/>
        </authorList>
    </citation>
    <scope>NUCLEOTIDE SEQUENCE [LARGE SCALE GENOMIC DNA]</scope>
    <source>
        <strain>IAI39 / ExPEC</strain>
    </source>
</reference>
<organism>
    <name type="scientific">Escherichia coli O7:K1 (strain IAI39 / ExPEC)</name>
    <dbReference type="NCBI Taxonomy" id="585057"/>
    <lineage>
        <taxon>Bacteria</taxon>
        <taxon>Pseudomonadati</taxon>
        <taxon>Pseudomonadota</taxon>
        <taxon>Gammaproteobacteria</taxon>
        <taxon>Enterobacterales</taxon>
        <taxon>Enterobacteriaceae</taxon>
        <taxon>Escherichia</taxon>
    </lineage>
</organism>
<comment type="function">
    <text evidence="1">This is one of the proteins that bind and probably mediate the attachment of the 5S RNA into the large ribosomal subunit, where it forms part of the central protuberance. In the 70S ribosome it contacts protein S13 of the 30S subunit (bridge B1b), connecting the 2 subunits; this bridge is implicated in subunit movement. Contacts the P site tRNA; the 5S rRNA and some of its associated proteins might help stabilize positioning of ribosome-bound tRNAs.</text>
</comment>
<comment type="subunit">
    <text evidence="1">Part of the 50S ribosomal subunit; part of the 5S rRNA/L5/L18/L25 subcomplex. Contacts the 5S rRNA and the P site tRNA. Forms a bridge to the 30S subunit in the 70S ribosome.</text>
</comment>
<comment type="similarity">
    <text evidence="1">Belongs to the universal ribosomal protein uL5 family.</text>
</comment>
<keyword id="KW-0007">Acetylation</keyword>
<keyword id="KW-0687">Ribonucleoprotein</keyword>
<keyword id="KW-0689">Ribosomal protein</keyword>
<keyword id="KW-0694">RNA-binding</keyword>
<keyword id="KW-0699">rRNA-binding</keyword>
<keyword id="KW-0820">tRNA-binding</keyword>
<accession>B7NLM7</accession>